<evidence type="ECO:0000250" key="1"/>
<evidence type="ECO:0000250" key="2">
    <source>
        <dbReference type="UniProtKB" id="A2AVJ5"/>
    </source>
</evidence>
<evidence type="ECO:0000250" key="3">
    <source>
        <dbReference type="UniProtKB" id="Q6MZQ0"/>
    </source>
</evidence>
<evidence type="ECO:0000256" key="4">
    <source>
        <dbReference type="SAM" id="MobiDB-lite"/>
    </source>
</evidence>
<evidence type="ECO:0000305" key="5"/>
<accession>Q5E9R0</accession>
<accession>B0JYP4</accession>
<protein>
    <recommendedName>
        <fullName>Proline-rich protein 5-like</fullName>
    </recommendedName>
    <alternativeName>
        <fullName>Protein observed with Rictor-2</fullName>
        <shortName>Protor-2</shortName>
    </alternativeName>
</protein>
<sequence length="368" mass="40826">MTRGFTPSLPVEFPKMGSFRRPRPRFMSSPALSDLPRFQAARQALQLSSNSAWNSVQTAVINVFKGGGLQSNELYALNENIRRLLKSELGSFITDYFQNQLLAKGLLFVEEKIKLCEGENRIEVLAEVWDHFFTETLPTLQAIFYPVQGQELTIRQISLLGFRDLVLLKVKLEDLLLLAQPQLPSSIVQMLLILQSVHEPTGPSEGYLQLEELVKQVVSPFLGISEDRGLSGPTYTLARRHSRVRPKVTLLNYASPITPVSRPLNEMALTPLTEQEGEAYLEKCGSVRRHTVANAHSDIQLLAMATMMHSGLGEESGGEDKCLLLQPSFPPPHRQCSSEPNITDGPDEPEQGATGSQEDSELNCASLS</sequence>
<gene>
    <name type="primary">PRR5L</name>
    <name type="synonym">PROTOR2</name>
</gene>
<keyword id="KW-0597">Phosphoprotein</keyword>
<keyword id="KW-1185">Reference proteome</keyword>
<keyword id="KW-0734">Signal transduction inhibitor</keyword>
<keyword id="KW-0832">Ubl conjugation</keyword>
<comment type="function">
    <text evidence="3">Associates with the mTORC2 complex that regulates cellular processes including survival and organization of the cytoskeleton. Regulates the activity of the mTORC2 complex in a substrate-specific manner preventing for instance the specific phosphorylation of PKCs and thereby controlling cell migration. Plays a role in the stimulation of ZFP36-mediated mRNA decay of several ZFP36-associated mRNAs, such as TNF-alpha and GM-CSF, in response to stress. Required for ZFP36 localization to cytoplasmic stress granule (SG) and P-body (PB) in response to stress.</text>
</comment>
<comment type="subunit">
    <text evidence="3">Interacts with the mammalian target of rapamycin complex 2 (mTORC2) which contains MTOR, MLST8, PRR5, RICTOR, MAPKAP1 and DEPTOR. Interacts with RFFL. Interacts (via C-terminus) with ZFP36 (via C-terminus); this interaction may accelerate ZFP36-mediated mRNA decay during stress. Interacts with RICTOR.</text>
</comment>
<comment type="PTM">
    <text evidence="1">Ubiquitinated. Ubiquitination by RFFL promotes proteasomal degradation of PRR5L thereby modifying the substrate-specific activity of the mTORC2 complex. Ubiquitination by RFFL is stimulated by LPA/lysophosphatidic acid (By similarity).</text>
</comment>
<comment type="similarity">
    <text evidence="5">Belongs to the PROTOR family.</text>
</comment>
<reference key="1">
    <citation type="journal article" date="2005" name="BMC Genomics">
        <title>Characterization of 954 bovine full-CDS cDNA sequences.</title>
        <authorList>
            <person name="Harhay G.P."/>
            <person name="Sonstegard T.S."/>
            <person name="Keele J.W."/>
            <person name="Heaton M.P."/>
            <person name="Clawson M.L."/>
            <person name="Snelling W.M."/>
            <person name="Wiedmann R.T."/>
            <person name="Van Tassell C.P."/>
            <person name="Smith T.P.L."/>
        </authorList>
    </citation>
    <scope>NUCLEOTIDE SEQUENCE [LARGE SCALE MRNA]</scope>
</reference>
<reference key="2">
    <citation type="submission" date="2007-07" db="EMBL/GenBank/DDBJ databases">
        <authorList>
            <consortium name="NIH - Mammalian Gene Collection (MGC) project"/>
        </authorList>
    </citation>
    <scope>NUCLEOTIDE SEQUENCE [LARGE SCALE MRNA]</scope>
    <source>
        <strain>Hereford</strain>
        <tissue>Fetal liver</tissue>
    </source>
</reference>
<name>PRR5L_BOVIN</name>
<proteinExistence type="evidence at transcript level"/>
<feature type="chain" id="PRO_0000332708" description="Proline-rich protein 5-like">
    <location>
        <begin position="1"/>
        <end position="368"/>
    </location>
</feature>
<feature type="region of interest" description="Disordered" evidence="4">
    <location>
        <begin position="312"/>
        <end position="368"/>
    </location>
</feature>
<feature type="compositionally biased region" description="Polar residues" evidence="4">
    <location>
        <begin position="353"/>
        <end position="368"/>
    </location>
</feature>
<feature type="modified residue" description="Phosphoserine" evidence="2">
    <location>
        <position position="28"/>
    </location>
</feature>
<feature type="sequence conflict" description="In Ref. 2; AAI51483." evidence="5" ref="2">
    <original>T</original>
    <variation>A</variation>
    <location>
        <position position="6"/>
    </location>
</feature>
<feature type="sequence conflict" description="In Ref. 2; AAI51483." evidence="5" ref="2">
    <original>H</original>
    <variation>R</variation>
    <location>
        <position position="309"/>
    </location>
</feature>
<dbReference type="EMBL" id="BT020860">
    <property type="protein sequence ID" value="AAX08877.1"/>
    <property type="molecule type" value="mRNA"/>
</dbReference>
<dbReference type="EMBL" id="BC151482">
    <property type="protein sequence ID" value="AAI51483.1"/>
    <property type="molecule type" value="mRNA"/>
</dbReference>
<dbReference type="RefSeq" id="NP_001015519.1">
    <property type="nucleotide sequence ID" value="NM_001015519.1"/>
</dbReference>
<dbReference type="FunCoup" id="Q5E9R0">
    <property type="interactions" value="32"/>
</dbReference>
<dbReference type="STRING" id="9913.ENSBTAP00000028004"/>
<dbReference type="PaxDb" id="9913-ENSBTAP00000028004"/>
<dbReference type="GeneID" id="505048"/>
<dbReference type="KEGG" id="bta:505048"/>
<dbReference type="CTD" id="79899"/>
<dbReference type="eggNOG" id="ENOG502QSM7">
    <property type="taxonomic scope" value="Eukaryota"/>
</dbReference>
<dbReference type="InParanoid" id="Q5E9R0"/>
<dbReference type="OrthoDB" id="2290221at2759"/>
<dbReference type="Proteomes" id="UP000009136">
    <property type="component" value="Unplaced"/>
</dbReference>
<dbReference type="GO" id="GO:0031932">
    <property type="term" value="C:TORC2 complex"/>
    <property type="evidence" value="ECO:0000250"/>
    <property type="project" value="UniProtKB"/>
</dbReference>
<dbReference type="GO" id="GO:0034599">
    <property type="term" value="P:cellular response to oxidative stress"/>
    <property type="evidence" value="ECO:0000250"/>
    <property type="project" value="UniProtKB"/>
</dbReference>
<dbReference type="GO" id="GO:0001933">
    <property type="term" value="P:negative regulation of protein phosphorylation"/>
    <property type="evidence" value="ECO:0000250"/>
    <property type="project" value="UniProtKB"/>
</dbReference>
<dbReference type="GO" id="GO:0009968">
    <property type="term" value="P:negative regulation of signal transduction"/>
    <property type="evidence" value="ECO:0007669"/>
    <property type="project" value="UniProtKB-KW"/>
</dbReference>
<dbReference type="GO" id="GO:0090316">
    <property type="term" value="P:positive regulation of intracellular protein transport"/>
    <property type="evidence" value="ECO:0000250"/>
    <property type="project" value="UniProtKB"/>
</dbReference>
<dbReference type="GO" id="GO:0061014">
    <property type="term" value="P:positive regulation of mRNA catabolic process"/>
    <property type="evidence" value="ECO:0000250"/>
    <property type="project" value="UniProtKB"/>
</dbReference>
<dbReference type="GO" id="GO:0010762">
    <property type="term" value="P:regulation of fibroblast migration"/>
    <property type="evidence" value="ECO:0000250"/>
    <property type="project" value="UniProtKB"/>
</dbReference>
<dbReference type="GO" id="GO:0038203">
    <property type="term" value="P:TORC2 signaling"/>
    <property type="evidence" value="ECO:0000250"/>
    <property type="project" value="UniProtKB"/>
</dbReference>
<dbReference type="InterPro" id="IPR013745">
    <property type="entry name" value="Bit61/PRR5"/>
</dbReference>
<dbReference type="PANTHER" id="PTHR32428:SF3">
    <property type="entry name" value="PROLINE-RICH PROTEIN 5-LIKE"/>
    <property type="match status" value="1"/>
</dbReference>
<dbReference type="PANTHER" id="PTHR32428">
    <property type="entry name" value="TARGET OF RAPAMYCIN COMPLEX 2 SUBUNIT BIT61-RELATED"/>
    <property type="match status" value="1"/>
</dbReference>
<dbReference type="Pfam" id="PF08539">
    <property type="entry name" value="HbrB"/>
    <property type="match status" value="1"/>
</dbReference>
<organism>
    <name type="scientific">Bos taurus</name>
    <name type="common">Bovine</name>
    <dbReference type="NCBI Taxonomy" id="9913"/>
    <lineage>
        <taxon>Eukaryota</taxon>
        <taxon>Metazoa</taxon>
        <taxon>Chordata</taxon>
        <taxon>Craniata</taxon>
        <taxon>Vertebrata</taxon>
        <taxon>Euteleostomi</taxon>
        <taxon>Mammalia</taxon>
        <taxon>Eutheria</taxon>
        <taxon>Laurasiatheria</taxon>
        <taxon>Artiodactyla</taxon>
        <taxon>Ruminantia</taxon>
        <taxon>Pecora</taxon>
        <taxon>Bovidae</taxon>
        <taxon>Bovinae</taxon>
        <taxon>Bos</taxon>
    </lineage>
</organism>